<organism evidence="9">
    <name type="scientific">Gibberella moniliformis (strain M3125 / FGSC 7600)</name>
    <name type="common">Maize ear and stalk rot fungus</name>
    <name type="synonym">Fusarium verticillioides</name>
    <dbReference type="NCBI Taxonomy" id="334819"/>
    <lineage>
        <taxon>Eukaryota</taxon>
        <taxon>Fungi</taxon>
        <taxon>Dikarya</taxon>
        <taxon>Ascomycota</taxon>
        <taxon>Pezizomycotina</taxon>
        <taxon>Sordariomycetes</taxon>
        <taxon>Hypocreomycetidae</taxon>
        <taxon>Hypocreales</taxon>
        <taxon>Nectriaceae</taxon>
        <taxon>Fusarium</taxon>
        <taxon>Fusarium fujikuroi species complex</taxon>
    </lineage>
</organism>
<sequence>MGKSRQNSTTTVDREKDEIQKAMGHEKAEFEALEVARHGGREIDDLIDDMERQLDEAGGLNKGFFQVQFANPKHFTWLLVAFASMGGLLSGLDQSLISGANLFLPDDLGLTEHENSLVNSGMPLGAVGGALLLSPANEYFGRKGAIIISIILYTIGAALEAGSINFGMIVSSRVILGLGVGLEGGTVPVYVAETVERRIRGNLVSLYQFNIALGEVLGYAVGAIFLNVPGNWRYILGSSLLFSTIMFFGMLFLPESPRFLIHQKRHLDAYKVWKRIRGIEDRESREEFYVMSASVVSEENAVAEGAKNHRFPWMDFFTEPRARRALVYANIMILLGQLTGVNAIMYYMSVLMNQIGFDKKESNYMSLVGGGSLLLGTIPAIFLMERFGRRFWAITMLPGFFIGLVLIGVSYQFDVETQLQTVEGLYLSGLIIYMGFFGSYACLTWVVPSEVYPTYLRSYGMTTSDALLFLASFIVTYNFTAMQNAMGKTGLALGFYGGIAFIGEIYQIFFMPETKNKTLEEIDVVFSRPTMDIVRENWAGVKETTHLLLTGHWHKVFVEQAMTDPKDQVQVSHA</sequence>
<keyword id="KW-1003">Cell membrane</keyword>
<keyword id="KW-0472">Membrane</keyword>
<keyword id="KW-1185">Reference proteome</keyword>
<keyword id="KW-0812">Transmembrane</keyword>
<keyword id="KW-1133">Transmembrane helix</keyword>
<keyword id="KW-0813">Transport</keyword>
<accession>W7MAT5</accession>
<reference evidence="9" key="1">
    <citation type="journal article" date="2010" name="Nature">
        <title>Comparative genomics reveals mobile pathogenicity chromosomes in Fusarium.</title>
        <authorList>
            <person name="Ma L.-J."/>
            <person name="van der Does H.C."/>
            <person name="Borkovich K.A."/>
            <person name="Coleman J.J."/>
            <person name="Daboussi M.-J."/>
            <person name="Di Pietro A."/>
            <person name="Dufresne M."/>
            <person name="Freitag M."/>
            <person name="Grabherr M."/>
            <person name="Henrissat B."/>
            <person name="Houterman P.M."/>
            <person name="Kang S."/>
            <person name="Shim W.-B."/>
            <person name="Woloshuk C."/>
            <person name="Xie X."/>
            <person name="Xu J.-R."/>
            <person name="Antoniw J."/>
            <person name="Baker S.E."/>
            <person name="Bluhm B.H."/>
            <person name="Breakspear A."/>
            <person name="Brown D.W."/>
            <person name="Butchko R.A.E."/>
            <person name="Chapman S."/>
            <person name="Coulson R."/>
            <person name="Coutinho P.M."/>
            <person name="Danchin E.G.J."/>
            <person name="Diener A."/>
            <person name="Gale L.R."/>
            <person name="Gardiner D.M."/>
            <person name="Goff S."/>
            <person name="Hammond-Kosack K.E."/>
            <person name="Hilburn K."/>
            <person name="Hua-Van A."/>
            <person name="Jonkers W."/>
            <person name="Kazan K."/>
            <person name="Kodira C.D."/>
            <person name="Koehrsen M."/>
            <person name="Kumar L."/>
            <person name="Lee Y.-H."/>
            <person name="Li L."/>
            <person name="Manners J.M."/>
            <person name="Miranda-Saavedra D."/>
            <person name="Mukherjee M."/>
            <person name="Park G."/>
            <person name="Park J."/>
            <person name="Park S.-Y."/>
            <person name="Proctor R.H."/>
            <person name="Regev A."/>
            <person name="Ruiz-Roldan M.C."/>
            <person name="Sain D."/>
            <person name="Sakthikumar S."/>
            <person name="Sykes S."/>
            <person name="Schwartz D.C."/>
            <person name="Turgeon B.G."/>
            <person name="Wapinski I."/>
            <person name="Yoder O."/>
            <person name="Young S."/>
            <person name="Zeng Q."/>
            <person name="Zhou S."/>
            <person name="Galagan J."/>
            <person name="Cuomo C.A."/>
            <person name="Kistler H.C."/>
            <person name="Rep M."/>
        </authorList>
    </citation>
    <scope>NUCLEOTIDE SEQUENCE [LARGE SCALE GENOMIC DNA]</scope>
    <source>
        <strain evidence="9">M3125 / FGSC 7600</strain>
    </source>
</reference>
<reference evidence="6" key="2">
    <citation type="journal article" date="2008" name="Mol. Plant Pathol.">
        <title>Involvement of ZFR1 of Fusarium verticillioides in kernel colonization and the regulation of FST1, a putative sugar transporter gene required for fumonisin biosynthesis on maize kernels.</title>
        <authorList>
            <person name="Bluhm B.H."/>
            <person name="Kim H."/>
            <person name="Butchko R.A."/>
            <person name="Woloshuk C.P."/>
        </authorList>
    </citation>
    <scope>FUNCTION</scope>
    <scope>INDUCTION</scope>
    <scope>DISRUPTION PHENOTYPE</scope>
</reference>
<reference evidence="6" key="3">
    <citation type="journal article" date="2011" name="Mol. Plant Microbe Interact.">
        <title>Functional characterization of fst1 in Fusarium verticillioides during colonization of maize kernels.</title>
        <authorList>
            <person name="Kim H."/>
            <person name="Woloshuk C.P."/>
        </authorList>
    </citation>
    <scope>FUNCTION</scope>
    <scope>SUBCELLULAR LOCATION</scope>
    <scope>INDUCTION</scope>
    <scope>DISRUPTION PHENOTYPE</scope>
</reference>
<reference evidence="6" key="4">
    <citation type="journal article" date="2017" name="Mol. Plant Pathol.">
        <title>Involvement of FST1 from Fusarium verticillioides in virulence and transport of inositol.</title>
        <authorList>
            <person name="Niu C."/>
            <person name="Payne G.A."/>
            <person name="Woloshuk C.P."/>
        </authorList>
    </citation>
    <scope>FUNCTION</scope>
    <scope>CATALYTIC ACTIVITY</scope>
    <scope>SUBCELLULAR LOCATION</scope>
    <scope>DISRUPTION PHENOTYPE</scope>
    <scope>MUTAGENESIS OF 276-ILE--GLY-278; ARG-277; 295-VAL--SER-297; 520-GLU--ILE-522; 546-HIS--LEU-548 AND LEU-547</scope>
</reference>
<proteinExistence type="evidence at protein level"/>
<dbReference type="EMBL" id="CM000587">
    <property type="protein sequence ID" value="EWG48768.1"/>
    <property type="molecule type" value="Genomic_DNA"/>
</dbReference>
<dbReference type="RefSeq" id="XP_018754959.1">
    <property type="nucleotide sequence ID" value="XM_018897332.1"/>
</dbReference>
<dbReference type="SMR" id="W7MAT5"/>
<dbReference type="EnsemblFungi" id="FVEG_08441T0">
    <property type="protein sequence ID" value="FVEG_08441T0"/>
    <property type="gene ID" value="FVEG_08441"/>
</dbReference>
<dbReference type="GeneID" id="30066174"/>
<dbReference type="KEGG" id="fvr:FVEG_08441"/>
<dbReference type="VEuPathDB" id="FungiDB:FVEG_08441"/>
<dbReference type="eggNOG" id="KOG0254">
    <property type="taxonomic scope" value="Eukaryota"/>
</dbReference>
<dbReference type="HOGENOM" id="CLU_001265_30_5_1"/>
<dbReference type="OMA" id="MAIIVSC"/>
<dbReference type="OrthoDB" id="107975at110618"/>
<dbReference type="Proteomes" id="UP000009096">
    <property type="component" value="Chromosome 10"/>
</dbReference>
<dbReference type="GO" id="GO:0005886">
    <property type="term" value="C:plasma membrane"/>
    <property type="evidence" value="ECO:0000314"/>
    <property type="project" value="UniProtKB"/>
</dbReference>
<dbReference type="GO" id="GO:0005365">
    <property type="term" value="F:myo-inositol transmembrane transporter activity"/>
    <property type="evidence" value="ECO:0000316"/>
    <property type="project" value="UniProtKB"/>
</dbReference>
<dbReference type="GO" id="GO:1904679">
    <property type="term" value="P:myo-inositol import across plasma membrane"/>
    <property type="evidence" value="ECO:0000316"/>
    <property type="project" value="UniProtKB"/>
</dbReference>
<dbReference type="FunFam" id="1.20.1250.20:FF:000134">
    <property type="entry name" value="MFS sugar transporter protein"/>
    <property type="match status" value="1"/>
</dbReference>
<dbReference type="Gene3D" id="1.20.1250.20">
    <property type="entry name" value="MFS general substrate transporter like domains"/>
    <property type="match status" value="1"/>
</dbReference>
<dbReference type="InterPro" id="IPR020846">
    <property type="entry name" value="MFS_dom"/>
</dbReference>
<dbReference type="InterPro" id="IPR005828">
    <property type="entry name" value="MFS_sugar_transport-like"/>
</dbReference>
<dbReference type="InterPro" id="IPR036259">
    <property type="entry name" value="MFS_trans_sf"/>
</dbReference>
<dbReference type="InterPro" id="IPR050814">
    <property type="entry name" value="Myo-inositol_Transporter"/>
</dbReference>
<dbReference type="InterPro" id="IPR003663">
    <property type="entry name" value="Sugar/inositol_transpt"/>
</dbReference>
<dbReference type="InterPro" id="IPR005829">
    <property type="entry name" value="Sugar_transporter_CS"/>
</dbReference>
<dbReference type="NCBIfam" id="TIGR00879">
    <property type="entry name" value="SP"/>
    <property type="match status" value="1"/>
</dbReference>
<dbReference type="PANTHER" id="PTHR48020:SF9">
    <property type="entry name" value="MAJOR FACILITATOR SUPERFAMILY (MFS) PROFILE DOMAIN-CONTAINING PROTEIN"/>
    <property type="match status" value="1"/>
</dbReference>
<dbReference type="PANTHER" id="PTHR48020">
    <property type="entry name" value="PROTON MYO-INOSITOL COTRANSPORTER"/>
    <property type="match status" value="1"/>
</dbReference>
<dbReference type="Pfam" id="PF00083">
    <property type="entry name" value="Sugar_tr"/>
    <property type="match status" value="1"/>
</dbReference>
<dbReference type="PRINTS" id="PR00171">
    <property type="entry name" value="SUGRTRNSPORT"/>
</dbReference>
<dbReference type="SUPFAM" id="SSF103473">
    <property type="entry name" value="MFS general substrate transporter"/>
    <property type="match status" value="1"/>
</dbReference>
<dbReference type="PROSITE" id="PS50850">
    <property type="entry name" value="MFS"/>
    <property type="match status" value="1"/>
</dbReference>
<dbReference type="PROSITE" id="PS00216">
    <property type="entry name" value="SUGAR_TRANSPORT_1"/>
    <property type="match status" value="1"/>
</dbReference>
<dbReference type="PROSITE" id="PS00217">
    <property type="entry name" value="SUGAR_TRANSPORT_2"/>
    <property type="match status" value="1"/>
</dbReference>
<feature type="chain" id="PRO_0000456785" description="Myo-inositol transporter FST1">
    <location>
        <begin position="1"/>
        <end position="574"/>
    </location>
</feature>
<feature type="topological domain" description="Cytoplasmic" evidence="6">
    <location>
        <begin position="1"/>
        <end position="76"/>
    </location>
</feature>
<feature type="transmembrane region" description="Helical; Name=1" evidence="1">
    <location>
        <begin position="77"/>
        <end position="97"/>
    </location>
</feature>
<feature type="topological domain" description="Extracellular" evidence="6">
    <location>
        <begin position="98"/>
        <end position="115"/>
    </location>
</feature>
<feature type="transmembrane region" description="Helical; Name=2" evidence="1">
    <location>
        <begin position="116"/>
        <end position="136"/>
    </location>
</feature>
<feature type="topological domain" description="Cytoplasmic" evidence="6">
    <location>
        <begin position="137"/>
        <end position="143"/>
    </location>
</feature>
<feature type="transmembrane region" description="Helical; Name=3" evidence="1">
    <location>
        <begin position="144"/>
        <end position="164"/>
    </location>
</feature>
<feature type="topological domain" description="Extracellular" evidence="6">
    <location>
        <begin position="165"/>
        <end position="173"/>
    </location>
</feature>
<feature type="transmembrane region" description="Helical; Name=4" evidence="1">
    <location>
        <begin position="174"/>
        <end position="194"/>
    </location>
</feature>
<feature type="topological domain" description="Cytoplasmic" evidence="6">
    <location>
        <begin position="195"/>
        <end position="205"/>
    </location>
</feature>
<feature type="transmembrane region" description="Helical; Name=5" evidence="1">
    <location>
        <begin position="206"/>
        <end position="226"/>
    </location>
</feature>
<feature type="topological domain" description="Extracellular" evidence="6">
    <location>
        <begin position="227"/>
        <end position="233"/>
    </location>
</feature>
<feature type="transmembrane region" description="Helical; Name=6" evidence="1">
    <location>
        <begin position="234"/>
        <end position="254"/>
    </location>
</feature>
<feature type="topological domain" description="Cytoplasmic" evidence="6">
    <location>
        <begin position="255"/>
        <end position="330"/>
    </location>
</feature>
<feature type="transmembrane region" description="Helical; Name=7" evidence="1">
    <location>
        <begin position="331"/>
        <end position="351"/>
    </location>
</feature>
<feature type="topological domain" description="Extracellular" evidence="6">
    <location>
        <begin position="352"/>
        <end position="363"/>
    </location>
</feature>
<feature type="transmembrane region" description="Helical; Name=8" evidence="1">
    <location>
        <begin position="364"/>
        <end position="384"/>
    </location>
</feature>
<feature type="topological domain" description="Cytoplasmic" evidence="6">
    <location>
        <begin position="385"/>
        <end position="390"/>
    </location>
</feature>
<feature type="transmembrane region" description="Helical; Name=9" evidence="1">
    <location>
        <begin position="391"/>
        <end position="411"/>
    </location>
</feature>
<feature type="topological domain" description="Extracellular" evidence="6">
    <location>
        <begin position="412"/>
        <end position="426"/>
    </location>
</feature>
<feature type="transmembrane region" description="Helical; Name=10" evidence="1">
    <location>
        <begin position="427"/>
        <end position="447"/>
    </location>
</feature>
<feature type="topological domain" description="Cytoplasmic" evidence="6">
    <location>
        <begin position="448"/>
        <end position="465"/>
    </location>
</feature>
<feature type="transmembrane region" description="Helical; Name=11" evidence="1">
    <location>
        <begin position="466"/>
        <end position="486"/>
    </location>
</feature>
<feature type="topological domain" description="Extracellular" evidence="6">
    <location>
        <begin position="487"/>
        <end position="490"/>
    </location>
</feature>
<feature type="transmembrane region" description="Helical; Name=12" evidence="1">
    <location>
        <begin position="491"/>
        <end position="511"/>
    </location>
</feature>
<feature type="topological domain" description="Cytoplasmic" evidence="6">
    <location>
        <begin position="512"/>
        <end position="574"/>
    </location>
</feature>
<feature type="mutagenesis site" description="Abolishes transporter activity. Abolishes synthesis of the polyketide mycotoxin fumonisin B1 (FB1), severely decreases macroconidia production." evidence="4">
    <location>
        <begin position="276"/>
        <end position="278"/>
    </location>
</feature>
<feature type="mutagenesis site" description="Abolishes production of the polyketide mycotoxin fumonisin B1 (FB1), severely decreases macroconidia production." evidence="4">
    <original>R</original>
    <variation>G</variation>
    <variation>K</variation>
    <location>
        <position position="277"/>
    </location>
</feature>
<feature type="mutagenesis site" description="Abolishes transporter activity. Abolishes synthesis of the polyketide mycotoxin fumonisin B1 (FB1), severely decreases macroconidia production, results in hydrogen peroxide sensitivity, and decreases virulence in maize kernels." evidence="4">
    <location>
        <begin position="295"/>
        <end position="297"/>
    </location>
</feature>
<feature type="mutagenesis site" description="Abolishes transporter activity. Abolishes synthesis of the polyketide mycotoxin fumonisin B1 (FB1), severely decreases macroconidia production." evidence="4">
    <location>
        <begin position="520"/>
        <end position="522"/>
    </location>
</feature>
<feature type="mutagenesis site" description="Abolishes transporter activity. Strongly decreases synthesis of the polyketide mycotoxin fumonisin B1 (FB1), severely decreases macroconidia production, results in hydrogen peroxide sensitivity, and decreases virulence in maize kernels." evidence="4">
    <location>
        <begin position="546"/>
        <end position="548"/>
    </location>
</feature>
<feature type="mutagenesis site" description="Decreases transporter activity. Moderately decreases synthesis of the polyketide mycotoxin fumonisin B1 (FB1)." evidence="4">
    <original>L</original>
    <variation>D</variation>
    <location>
        <position position="547"/>
    </location>
</feature>
<name>FST1_GIBM7</name>
<gene>
    <name evidence="5" type="primary">FST1</name>
    <name evidence="8" type="ORF">FVEG_08441</name>
</gene>
<protein>
    <recommendedName>
        <fullName evidence="5">Myo-inositol transporter FST1</fullName>
    </recommendedName>
</protein>
<comment type="function">
    <text evidence="2 3 4">Transporter for myo-inositol (PubMed:27195938). Also appears to transport the polyketide mycotoxin fumonisin B1 (FB1) (PubMed:20854112, PubMed:27195938). Does not appear to transport hexose sugars (PubMed:18705852, PubMed:20854112).</text>
</comment>
<comment type="catalytic activity">
    <reaction evidence="7">
        <text>myo-inositol(out) + H(+)(out) = myo-inositol(in) + H(+)(in)</text>
        <dbReference type="Rhea" id="RHEA:60364"/>
        <dbReference type="ChEBI" id="CHEBI:15378"/>
        <dbReference type="ChEBI" id="CHEBI:17268"/>
    </reaction>
</comment>
<comment type="subcellular location">
    <subcellularLocation>
        <location evidence="3 7">Cell membrane</location>
        <topology evidence="1">Multi-pass membrane protein</topology>
    </subcellularLocation>
</comment>
<comment type="induction">
    <text evidence="2 3">Expressed during growth on endosperm tissue (PubMed:18705852, PubMed:20854112). Repressed in conditions of high nitrogen (PubMed:20854112).</text>
</comment>
<comment type="disruption phenotype">
    <text evidence="2 3 4">Abolishes synthesis of the polyketide mycotoxin fumonisin B1 (FB1), severely decreases macroconidia production, results in hydrogen peroxide sensitivity, and decreases virulence in maize kernels.</text>
</comment>
<comment type="similarity">
    <text evidence="6">Belongs to the major facilitator superfamily. Sugar transporter (TC 2.A.1.1) family.</text>
</comment>
<evidence type="ECO:0000255" key="1"/>
<evidence type="ECO:0000269" key="2">
    <source>
    </source>
</evidence>
<evidence type="ECO:0000269" key="3">
    <source>
    </source>
</evidence>
<evidence type="ECO:0000269" key="4">
    <source>
    </source>
</evidence>
<evidence type="ECO:0000303" key="5">
    <source>
    </source>
</evidence>
<evidence type="ECO:0000305" key="6"/>
<evidence type="ECO:0000305" key="7">
    <source>
    </source>
</evidence>
<evidence type="ECO:0000312" key="8">
    <source>
        <dbReference type="EMBL" id="EWG48768.1"/>
    </source>
</evidence>
<evidence type="ECO:0000312" key="9">
    <source>
        <dbReference type="Proteomes" id="UP000009096"/>
    </source>
</evidence>